<accession>Q57743</accession>
<proteinExistence type="inferred from homology"/>
<gene>
    <name evidence="1" type="primary">fdhD</name>
    <name type="ordered locus">MJ0295</name>
</gene>
<organism>
    <name type="scientific">Methanocaldococcus jannaschii (strain ATCC 43067 / DSM 2661 / JAL-1 / JCM 10045 / NBRC 100440)</name>
    <name type="common">Methanococcus jannaschii</name>
    <dbReference type="NCBI Taxonomy" id="243232"/>
    <lineage>
        <taxon>Archaea</taxon>
        <taxon>Methanobacteriati</taxon>
        <taxon>Methanobacteriota</taxon>
        <taxon>Methanomada group</taxon>
        <taxon>Methanococci</taxon>
        <taxon>Methanococcales</taxon>
        <taxon>Methanocaldococcaceae</taxon>
        <taxon>Methanocaldococcus</taxon>
    </lineage>
</organism>
<name>FDHD_METJA</name>
<evidence type="ECO:0000255" key="1">
    <source>
        <dbReference type="HAMAP-Rule" id="MF_00187"/>
    </source>
</evidence>
<reference key="1">
    <citation type="journal article" date="1996" name="Science">
        <title>Complete genome sequence of the methanogenic archaeon, Methanococcus jannaschii.</title>
        <authorList>
            <person name="Bult C.J."/>
            <person name="White O."/>
            <person name="Olsen G.J."/>
            <person name="Zhou L."/>
            <person name="Fleischmann R.D."/>
            <person name="Sutton G.G."/>
            <person name="Blake J.A."/>
            <person name="FitzGerald L.M."/>
            <person name="Clayton R.A."/>
            <person name="Gocayne J.D."/>
            <person name="Kerlavage A.R."/>
            <person name="Dougherty B.A."/>
            <person name="Tomb J.-F."/>
            <person name="Adams M.D."/>
            <person name="Reich C.I."/>
            <person name="Overbeek R."/>
            <person name="Kirkness E.F."/>
            <person name="Weinstock K.G."/>
            <person name="Merrick J.M."/>
            <person name="Glodek A."/>
            <person name="Scott J.L."/>
            <person name="Geoghagen N.S.M."/>
            <person name="Weidman J.F."/>
            <person name="Fuhrmann J.L."/>
            <person name="Nguyen D."/>
            <person name="Utterback T.R."/>
            <person name="Kelley J.M."/>
            <person name="Peterson J.D."/>
            <person name="Sadow P.W."/>
            <person name="Hanna M.C."/>
            <person name="Cotton M.D."/>
            <person name="Roberts K.M."/>
            <person name="Hurst M.A."/>
            <person name="Kaine B.P."/>
            <person name="Borodovsky M."/>
            <person name="Klenk H.-P."/>
            <person name="Fraser C.M."/>
            <person name="Smith H.O."/>
            <person name="Woese C.R."/>
            <person name="Venter J.C."/>
        </authorList>
    </citation>
    <scope>NUCLEOTIDE SEQUENCE [LARGE SCALE GENOMIC DNA]</scope>
    <source>
        <strain>ATCC 43067 / DSM 2661 / JAL-1 / JCM 10045 / NBRC 100440</strain>
    </source>
</reference>
<protein>
    <recommendedName>
        <fullName evidence="1">Protein FdhD</fullName>
    </recommendedName>
</protein>
<dbReference type="EMBL" id="L77117">
    <property type="protein sequence ID" value="AAB98280.1"/>
    <property type="molecule type" value="Genomic_DNA"/>
</dbReference>
<dbReference type="PIR" id="H64336">
    <property type="entry name" value="H64336"/>
</dbReference>
<dbReference type="RefSeq" id="WP_010869793.1">
    <property type="nucleotide sequence ID" value="NC_000909.1"/>
</dbReference>
<dbReference type="SMR" id="Q57743"/>
<dbReference type="STRING" id="243232.MJ_0295"/>
<dbReference type="PaxDb" id="243232-MJ_0295"/>
<dbReference type="EnsemblBacteria" id="AAB98280">
    <property type="protein sequence ID" value="AAB98280"/>
    <property type="gene ID" value="MJ_0295"/>
</dbReference>
<dbReference type="GeneID" id="1451150"/>
<dbReference type="KEGG" id="mja:MJ_0295"/>
<dbReference type="eggNOG" id="arCOG04358">
    <property type="taxonomic scope" value="Archaea"/>
</dbReference>
<dbReference type="HOGENOM" id="CLU_056887_4_2_2"/>
<dbReference type="InParanoid" id="Q57743"/>
<dbReference type="OrthoDB" id="57189at2157"/>
<dbReference type="PhylomeDB" id="Q57743"/>
<dbReference type="Proteomes" id="UP000000805">
    <property type="component" value="Chromosome"/>
</dbReference>
<dbReference type="GO" id="GO:0005737">
    <property type="term" value="C:cytoplasm"/>
    <property type="evidence" value="ECO:0007669"/>
    <property type="project" value="UniProtKB-SubCell"/>
</dbReference>
<dbReference type="GO" id="GO:0016783">
    <property type="term" value="F:sulfurtransferase activity"/>
    <property type="evidence" value="ECO:0007669"/>
    <property type="project" value="InterPro"/>
</dbReference>
<dbReference type="GO" id="GO:0006777">
    <property type="term" value="P:Mo-molybdopterin cofactor biosynthetic process"/>
    <property type="evidence" value="ECO:0007669"/>
    <property type="project" value="UniProtKB-UniRule"/>
</dbReference>
<dbReference type="Gene3D" id="3.10.20.10">
    <property type="match status" value="1"/>
</dbReference>
<dbReference type="Gene3D" id="3.40.140.10">
    <property type="entry name" value="Cytidine Deaminase, domain 2"/>
    <property type="match status" value="1"/>
</dbReference>
<dbReference type="HAMAP" id="MF_00187">
    <property type="entry name" value="FdhD"/>
    <property type="match status" value="1"/>
</dbReference>
<dbReference type="InterPro" id="IPR016193">
    <property type="entry name" value="Cytidine_deaminase-like"/>
</dbReference>
<dbReference type="InterPro" id="IPR003786">
    <property type="entry name" value="FdhD"/>
</dbReference>
<dbReference type="NCBIfam" id="TIGR00129">
    <property type="entry name" value="fdhD_narQ"/>
    <property type="match status" value="1"/>
</dbReference>
<dbReference type="PANTHER" id="PTHR30592">
    <property type="entry name" value="FORMATE DEHYDROGENASE"/>
    <property type="match status" value="1"/>
</dbReference>
<dbReference type="PANTHER" id="PTHR30592:SF1">
    <property type="entry name" value="SULFUR CARRIER PROTEIN FDHD"/>
    <property type="match status" value="1"/>
</dbReference>
<dbReference type="Pfam" id="PF02634">
    <property type="entry name" value="FdhD-NarQ"/>
    <property type="match status" value="1"/>
</dbReference>
<dbReference type="PIRSF" id="PIRSF015626">
    <property type="entry name" value="FdhD"/>
    <property type="match status" value="1"/>
</dbReference>
<dbReference type="SUPFAM" id="SSF53927">
    <property type="entry name" value="Cytidine deaminase-like"/>
    <property type="match status" value="1"/>
</dbReference>
<comment type="function">
    <text evidence="1">Required for formate dehydrogenase (FDH) activity.</text>
</comment>
<comment type="subcellular location">
    <subcellularLocation>
        <location evidence="1">Cytoplasm</location>
    </subcellularLocation>
</comment>
<comment type="similarity">
    <text evidence="1">Belongs to the FdhD family.</text>
</comment>
<sequence>MIKKVKIKKFNGRDFYDMEDYVAVEESYNIFINGEFVKSLSMSPNFLNEFAVGFAISEGFLNKIDKVEVDKNNINIFGEKNDREIKNNKNNKEIKIDIEIIKKIISYEIKAKYWEITGSFHWASMFDLKGNSIIFVEDIGRHNAVDKVIGYAILNNYNLNKLILRYSGRIPSDIVKKAINSGLNIIISKSPPTDKAIELAEENNILLIGFARNGKFNIYTSGRLWEE</sequence>
<keyword id="KW-0963">Cytoplasm</keyword>
<keyword id="KW-0501">Molybdenum cofactor biosynthesis</keyword>
<keyword id="KW-1185">Reference proteome</keyword>
<feature type="chain" id="PRO_0000152936" description="Protein FdhD">
    <location>
        <begin position="1"/>
        <end position="227"/>
    </location>
</feature>
<feature type="binding site" evidence="1">
    <location>
        <begin position="210"/>
        <end position="215"/>
    </location>
    <ligand>
        <name>Mo-bis(molybdopterin guanine dinucleotide)</name>
        <dbReference type="ChEBI" id="CHEBI:60539"/>
    </ligand>
</feature>